<sequence>MIRQRTLKSTVKATGVGLHGGRKVNLVLRPAAPDTGIVFHRVDLDPPLDLPADPYAVCDTRMCSGLEKGGQKVGTVEHLMSALAGLGIDNLHIDVDAPEIPILDGSSGPFVFLLQSAGIEEQKAPKRFLRVKKPVEYREGDKWVRLEPYDGFRLDFSIVFNHPAIDSTSTAVSIDFATHSYVRDVARARTFGFMQDVEFMRANGLALGGSLENAIVMDEYRVLNADGLRYADEFVKHKVLDAIGDLYLCGHPLLARYSAHKSGHALNNQILRVLLEDRSAWEIVSFEREAATPPAVAHQFAPVLAAA</sequence>
<proteinExistence type="inferred from homology"/>
<organism>
    <name type="scientific">Azoarcus sp. (strain BH72)</name>
    <dbReference type="NCBI Taxonomy" id="418699"/>
    <lineage>
        <taxon>Bacteria</taxon>
        <taxon>Pseudomonadati</taxon>
        <taxon>Pseudomonadota</taxon>
        <taxon>Betaproteobacteria</taxon>
        <taxon>Rhodocyclales</taxon>
        <taxon>Zoogloeaceae</taxon>
        <taxon>Azoarcus</taxon>
    </lineage>
</organism>
<gene>
    <name evidence="1" type="primary">lpxC</name>
    <name type="ordered locus">azo0890</name>
</gene>
<name>LPXC_AZOSB</name>
<accession>A1K3V2</accession>
<dbReference type="EC" id="3.5.1.108" evidence="1"/>
<dbReference type="EMBL" id="AM406670">
    <property type="protein sequence ID" value="CAL93507.1"/>
    <property type="molecule type" value="Genomic_DNA"/>
</dbReference>
<dbReference type="RefSeq" id="WP_011764624.1">
    <property type="nucleotide sequence ID" value="NC_008702.1"/>
</dbReference>
<dbReference type="SMR" id="A1K3V2"/>
<dbReference type="STRING" id="62928.azo0890"/>
<dbReference type="KEGG" id="aoa:dqs_0961"/>
<dbReference type="KEGG" id="azo:azo0890"/>
<dbReference type="eggNOG" id="COG0774">
    <property type="taxonomic scope" value="Bacteria"/>
</dbReference>
<dbReference type="HOGENOM" id="CLU_046528_1_0_4"/>
<dbReference type="OrthoDB" id="9802746at2"/>
<dbReference type="UniPathway" id="UPA00359">
    <property type="reaction ID" value="UER00478"/>
</dbReference>
<dbReference type="Proteomes" id="UP000002588">
    <property type="component" value="Chromosome"/>
</dbReference>
<dbReference type="GO" id="GO:0016020">
    <property type="term" value="C:membrane"/>
    <property type="evidence" value="ECO:0007669"/>
    <property type="project" value="GOC"/>
</dbReference>
<dbReference type="GO" id="GO:0046872">
    <property type="term" value="F:metal ion binding"/>
    <property type="evidence" value="ECO:0007669"/>
    <property type="project" value="UniProtKB-KW"/>
</dbReference>
<dbReference type="GO" id="GO:0103117">
    <property type="term" value="F:UDP-3-O-acyl-N-acetylglucosamine deacetylase activity"/>
    <property type="evidence" value="ECO:0007669"/>
    <property type="project" value="UniProtKB-UniRule"/>
</dbReference>
<dbReference type="GO" id="GO:0009245">
    <property type="term" value="P:lipid A biosynthetic process"/>
    <property type="evidence" value="ECO:0007669"/>
    <property type="project" value="UniProtKB-UniRule"/>
</dbReference>
<dbReference type="Gene3D" id="3.30.230.20">
    <property type="entry name" value="lpxc deacetylase, domain 1"/>
    <property type="match status" value="1"/>
</dbReference>
<dbReference type="Gene3D" id="3.30.1700.10">
    <property type="entry name" value="lpxc deacetylase, domain 2"/>
    <property type="match status" value="1"/>
</dbReference>
<dbReference type="HAMAP" id="MF_00388">
    <property type="entry name" value="LpxC"/>
    <property type="match status" value="1"/>
</dbReference>
<dbReference type="InterPro" id="IPR020568">
    <property type="entry name" value="Ribosomal_Su5_D2-typ_SF"/>
</dbReference>
<dbReference type="InterPro" id="IPR004463">
    <property type="entry name" value="UDP-acyl_GlcNac_deAcase"/>
</dbReference>
<dbReference type="InterPro" id="IPR011334">
    <property type="entry name" value="UDP-acyl_GlcNac_deAcase_C"/>
</dbReference>
<dbReference type="InterPro" id="IPR015870">
    <property type="entry name" value="UDP-acyl_N-AcGlcN_deAcase_N"/>
</dbReference>
<dbReference type="NCBIfam" id="TIGR00325">
    <property type="entry name" value="lpxC"/>
    <property type="match status" value="1"/>
</dbReference>
<dbReference type="PANTHER" id="PTHR33694">
    <property type="entry name" value="UDP-3-O-ACYL-N-ACETYLGLUCOSAMINE DEACETYLASE 1, MITOCHONDRIAL-RELATED"/>
    <property type="match status" value="1"/>
</dbReference>
<dbReference type="PANTHER" id="PTHR33694:SF1">
    <property type="entry name" value="UDP-3-O-ACYL-N-ACETYLGLUCOSAMINE DEACETYLASE 1, MITOCHONDRIAL-RELATED"/>
    <property type="match status" value="1"/>
</dbReference>
<dbReference type="Pfam" id="PF03331">
    <property type="entry name" value="LpxC"/>
    <property type="match status" value="1"/>
</dbReference>
<dbReference type="SUPFAM" id="SSF54211">
    <property type="entry name" value="Ribosomal protein S5 domain 2-like"/>
    <property type="match status" value="2"/>
</dbReference>
<feature type="chain" id="PRO_1000013189" description="UDP-3-O-acyl-N-acetylglucosamine deacetylase">
    <location>
        <begin position="1"/>
        <end position="307"/>
    </location>
</feature>
<feature type="active site" description="Proton donor" evidence="1">
    <location>
        <position position="264"/>
    </location>
</feature>
<feature type="binding site" evidence="1">
    <location>
        <position position="78"/>
    </location>
    <ligand>
        <name>Zn(2+)</name>
        <dbReference type="ChEBI" id="CHEBI:29105"/>
    </ligand>
</feature>
<feature type="binding site" evidence="1">
    <location>
        <position position="237"/>
    </location>
    <ligand>
        <name>Zn(2+)</name>
        <dbReference type="ChEBI" id="CHEBI:29105"/>
    </ligand>
</feature>
<feature type="binding site" evidence="1">
    <location>
        <position position="241"/>
    </location>
    <ligand>
        <name>Zn(2+)</name>
        <dbReference type="ChEBI" id="CHEBI:29105"/>
    </ligand>
</feature>
<comment type="function">
    <text evidence="1">Catalyzes the hydrolysis of UDP-3-O-myristoyl-N-acetylglucosamine to form UDP-3-O-myristoylglucosamine and acetate, the committed step in lipid A biosynthesis.</text>
</comment>
<comment type="catalytic activity">
    <reaction evidence="1">
        <text>a UDP-3-O-[(3R)-3-hydroxyacyl]-N-acetyl-alpha-D-glucosamine + H2O = a UDP-3-O-[(3R)-3-hydroxyacyl]-alpha-D-glucosamine + acetate</text>
        <dbReference type="Rhea" id="RHEA:67816"/>
        <dbReference type="ChEBI" id="CHEBI:15377"/>
        <dbReference type="ChEBI" id="CHEBI:30089"/>
        <dbReference type="ChEBI" id="CHEBI:137740"/>
        <dbReference type="ChEBI" id="CHEBI:173225"/>
        <dbReference type="EC" id="3.5.1.108"/>
    </reaction>
</comment>
<comment type="cofactor">
    <cofactor evidence="1">
        <name>Zn(2+)</name>
        <dbReference type="ChEBI" id="CHEBI:29105"/>
    </cofactor>
</comment>
<comment type="pathway">
    <text evidence="1">Glycolipid biosynthesis; lipid IV(A) biosynthesis; lipid IV(A) from (3R)-3-hydroxytetradecanoyl-[acyl-carrier-protein] and UDP-N-acetyl-alpha-D-glucosamine: step 2/6.</text>
</comment>
<comment type="similarity">
    <text evidence="1">Belongs to the LpxC family.</text>
</comment>
<evidence type="ECO:0000255" key="1">
    <source>
        <dbReference type="HAMAP-Rule" id="MF_00388"/>
    </source>
</evidence>
<keyword id="KW-0378">Hydrolase</keyword>
<keyword id="KW-0441">Lipid A biosynthesis</keyword>
<keyword id="KW-0444">Lipid biosynthesis</keyword>
<keyword id="KW-0443">Lipid metabolism</keyword>
<keyword id="KW-0479">Metal-binding</keyword>
<keyword id="KW-1185">Reference proteome</keyword>
<keyword id="KW-0862">Zinc</keyword>
<reference key="1">
    <citation type="journal article" date="2006" name="Nat. Biotechnol.">
        <title>Complete genome of the mutualistic, N2-fixing grass endophyte Azoarcus sp. strain BH72.</title>
        <authorList>
            <person name="Krause A."/>
            <person name="Ramakumar A."/>
            <person name="Bartels D."/>
            <person name="Battistoni F."/>
            <person name="Bekel T."/>
            <person name="Boch J."/>
            <person name="Boehm M."/>
            <person name="Friedrich F."/>
            <person name="Hurek T."/>
            <person name="Krause L."/>
            <person name="Linke B."/>
            <person name="McHardy A.C."/>
            <person name="Sarkar A."/>
            <person name="Schneiker S."/>
            <person name="Syed A.A."/>
            <person name="Thauer R."/>
            <person name="Vorhoelter F.-J."/>
            <person name="Weidner S."/>
            <person name="Puehler A."/>
            <person name="Reinhold-Hurek B."/>
            <person name="Kaiser O."/>
            <person name="Goesmann A."/>
        </authorList>
    </citation>
    <scope>NUCLEOTIDE SEQUENCE [LARGE SCALE GENOMIC DNA]</scope>
    <source>
        <strain>BH72</strain>
    </source>
</reference>
<protein>
    <recommendedName>
        <fullName evidence="1">UDP-3-O-acyl-N-acetylglucosamine deacetylase</fullName>
        <shortName evidence="1">UDP-3-O-acyl-GlcNAc deacetylase</shortName>
        <ecNumber evidence="1">3.5.1.108</ecNumber>
    </recommendedName>
    <alternativeName>
        <fullName evidence="1">UDP-3-O-[R-3-hydroxymyristoyl]-N-acetylglucosamine deacetylase</fullName>
    </alternativeName>
</protein>